<dbReference type="EMBL" id="BX571857">
    <property type="protein sequence ID" value="CAG43099.1"/>
    <property type="molecule type" value="Genomic_DNA"/>
</dbReference>
<dbReference type="RefSeq" id="WP_000469950.1">
    <property type="nucleotide sequence ID" value="NC_002953.3"/>
</dbReference>
<dbReference type="SMR" id="Q6G9H8"/>
<dbReference type="KEGG" id="sas:SAS1323"/>
<dbReference type="HOGENOM" id="CLU_036879_0_2_9"/>
<dbReference type="GO" id="GO:0005886">
    <property type="term" value="C:plasma membrane"/>
    <property type="evidence" value="ECO:0007669"/>
    <property type="project" value="UniProtKB-SubCell"/>
</dbReference>
<dbReference type="GO" id="GO:0015099">
    <property type="term" value="F:nickel cation transmembrane transporter activity"/>
    <property type="evidence" value="ECO:0007669"/>
    <property type="project" value="InterPro"/>
</dbReference>
<dbReference type="CDD" id="cd06261">
    <property type="entry name" value="TM_PBP2"/>
    <property type="match status" value="1"/>
</dbReference>
<dbReference type="Gene3D" id="1.10.3720.10">
    <property type="entry name" value="MetI-like"/>
    <property type="match status" value="1"/>
</dbReference>
<dbReference type="InterPro" id="IPR045621">
    <property type="entry name" value="BPD_transp_1_N"/>
</dbReference>
<dbReference type="InterPro" id="IPR000515">
    <property type="entry name" value="MetI-like"/>
</dbReference>
<dbReference type="InterPro" id="IPR035906">
    <property type="entry name" value="MetI-like_sf"/>
</dbReference>
<dbReference type="InterPro" id="IPR050045">
    <property type="entry name" value="Opp2B"/>
</dbReference>
<dbReference type="NCBIfam" id="NF045470">
    <property type="entry name" value="Opp2B"/>
    <property type="match status" value="1"/>
</dbReference>
<dbReference type="PANTHER" id="PTHR43163">
    <property type="entry name" value="DIPEPTIDE TRANSPORT SYSTEM PERMEASE PROTEIN DPPB-RELATED"/>
    <property type="match status" value="1"/>
</dbReference>
<dbReference type="PANTHER" id="PTHR43163:SF6">
    <property type="entry name" value="DIPEPTIDE TRANSPORT SYSTEM PERMEASE PROTEIN DPPB-RELATED"/>
    <property type="match status" value="1"/>
</dbReference>
<dbReference type="Pfam" id="PF00528">
    <property type="entry name" value="BPD_transp_1"/>
    <property type="match status" value="1"/>
</dbReference>
<dbReference type="Pfam" id="PF19300">
    <property type="entry name" value="BPD_transp_1_N"/>
    <property type="match status" value="1"/>
</dbReference>
<dbReference type="SUPFAM" id="SSF161098">
    <property type="entry name" value="MetI-like"/>
    <property type="match status" value="1"/>
</dbReference>
<dbReference type="PROSITE" id="PS50928">
    <property type="entry name" value="ABC_TM1"/>
    <property type="match status" value="1"/>
</dbReference>
<organism>
    <name type="scientific">Staphylococcus aureus (strain MSSA476)</name>
    <dbReference type="NCBI Taxonomy" id="282459"/>
    <lineage>
        <taxon>Bacteria</taxon>
        <taxon>Bacillati</taxon>
        <taxon>Bacillota</taxon>
        <taxon>Bacilli</taxon>
        <taxon>Bacillales</taxon>
        <taxon>Staphylococcaceae</taxon>
        <taxon>Staphylococcus</taxon>
    </lineage>
</organism>
<evidence type="ECO:0000250" key="1">
    <source>
        <dbReference type="UniProtKB" id="Q2FYQ5"/>
    </source>
</evidence>
<evidence type="ECO:0000255" key="2">
    <source>
        <dbReference type="PROSITE-ProRule" id="PRU00441"/>
    </source>
</evidence>
<evidence type="ECO:0000305" key="3"/>
<feature type="chain" id="PRO_0000276777" description="Nickel import system permease protein NikB">
    <location>
        <begin position="1"/>
        <end position="328"/>
    </location>
</feature>
<feature type="transmembrane region" description="Helical" evidence="2">
    <location>
        <begin position="11"/>
        <end position="31"/>
    </location>
</feature>
<feature type="transmembrane region" description="Helical" evidence="2">
    <location>
        <begin position="104"/>
        <end position="124"/>
    </location>
</feature>
<feature type="transmembrane region" description="Helical" evidence="2">
    <location>
        <begin position="139"/>
        <end position="159"/>
    </location>
</feature>
<feature type="transmembrane region" description="Helical" evidence="2">
    <location>
        <begin position="170"/>
        <end position="190"/>
    </location>
</feature>
<feature type="transmembrane region" description="Helical" evidence="2">
    <location>
        <begin position="229"/>
        <end position="249"/>
    </location>
</feature>
<feature type="transmembrane region" description="Helical" evidence="2">
    <location>
        <begin position="279"/>
        <end position="299"/>
    </location>
</feature>
<feature type="domain" description="ABC transmembrane type-1" evidence="2">
    <location>
        <begin position="100"/>
        <end position="297"/>
    </location>
</feature>
<reference key="1">
    <citation type="journal article" date="2004" name="Proc. Natl. Acad. Sci. U.S.A.">
        <title>Complete genomes of two clinical Staphylococcus aureus strains: evidence for the rapid evolution of virulence and drug resistance.</title>
        <authorList>
            <person name="Holden M.T.G."/>
            <person name="Feil E.J."/>
            <person name="Lindsay J.A."/>
            <person name="Peacock S.J."/>
            <person name="Day N.P.J."/>
            <person name="Enright M.C."/>
            <person name="Foster T.J."/>
            <person name="Moore C.E."/>
            <person name="Hurst L."/>
            <person name="Atkin R."/>
            <person name="Barron A."/>
            <person name="Bason N."/>
            <person name="Bentley S.D."/>
            <person name="Chillingworth C."/>
            <person name="Chillingworth T."/>
            <person name="Churcher C."/>
            <person name="Clark L."/>
            <person name="Corton C."/>
            <person name="Cronin A."/>
            <person name="Doggett J."/>
            <person name="Dowd L."/>
            <person name="Feltwell T."/>
            <person name="Hance Z."/>
            <person name="Harris B."/>
            <person name="Hauser H."/>
            <person name="Holroyd S."/>
            <person name="Jagels K."/>
            <person name="James K.D."/>
            <person name="Lennard N."/>
            <person name="Line A."/>
            <person name="Mayes R."/>
            <person name="Moule S."/>
            <person name="Mungall K."/>
            <person name="Ormond D."/>
            <person name="Quail M.A."/>
            <person name="Rabbinowitsch E."/>
            <person name="Rutherford K.M."/>
            <person name="Sanders M."/>
            <person name="Sharp S."/>
            <person name="Simmonds M."/>
            <person name="Stevens K."/>
            <person name="Whitehead S."/>
            <person name="Barrell B.G."/>
            <person name="Spratt B.G."/>
            <person name="Parkhill J."/>
        </authorList>
    </citation>
    <scope>NUCLEOTIDE SEQUENCE [LARGE SCALE GENOMIC DNA]</scope>
    <source>
        <strain>MSSA476</strain>
    </source>
</reference>
<accession>Q6G9H8</accession>
<proteinExistence type="inferred from homology"/>
<sequence>MFIIKSMLYRLMQMIVVLFVISTLTFILMKLSPGNPVDKILHLDVAQVSTEQINATKDKLGLNDSLLVQWWHWMNHLLHFNLGKSFESKEPVTQILFNYAPITLLISFSTLVVSLCISIPLGIIAAKRFHKWTDKVIRVISTLSISLPAFFIGIILLFIVTNLMNIDSVILSQFILPVITLSLGMCAYIIRLVRSNLLMLLQSNIVQASRLRGMNERYILIHDLLKPTILPIIPLLGISLGSLIGGTVVIENLFDIPGIGYLLMDSIKSRDYPVIQGCVLFIGFFVVIINTIADLLTLLLDPKQRLQLGNPKIKTNTPLISVSSDRHA</sequence>
<comment type="function">
    <text evidence="1">Part of the ABC transporter complex NikABCDE (Opp2) involved in nickel import. Probably responsible for the translocation of the substrate across the membrane.</text>
</comment>
<comment type="subunit">
    <text evidence="1">The complex is composed of two ATP-binding proteins (NikD and NikE), two transmembrane proteins (NikB and NikC) and a solute-binding protein (NikA).</text>
</comment>
<comment type="subcellular location">
    <subcellularLocation>
        <location evidence="3">Cell membrane</location>
        <topology evidence="2">Multi-pass membrane protein</topology>
    </subcellularLocation>
</comment>
<comment type="similarity">
    <text evidence="3">Belongs to the binding-protein-dependent transport system permease family. OppBC subfamily.</text>
</comment>
<name>NIKB_STAAS</name>
<protein>
    <recommendedName>
        <fullName evidence="1">Nickel import system permease protein NikB</fullName>
    </recommendedName>
</protein>
<gene>
    <name evidence="1" type="primary">nikB</name>
    <name type="synonym">oppB2</name>
    <name type="ordered locus">SAS1323</name>
</gene>
<keyword id="KW-1003">Cell membrane</keyword>
<keyword id="KW-0406">Ion transport</keyword>
<keyword id="KW-0472">Membrane</keyword>
<keyword id="KW-0533">Nickel</keyword>
<keyword id="KW-0921">Nickel transport</keyword>
<keyword id="KW-0812">Transmembrane</keyword>
<keyword id="KW-1133">Transmembrane helix</keyword>
<keyword id="KW-0813">Transport</keyword>